<proteinExistence type="inferred from homology"/>
<evidence type="ECO:0000250" key="1"/>
<evidence type="ECO:0000255" key="2">
    <source>
        <dbReference type="PROSITE-ProRule" id="PRU00405"/>
    </source>
</evidence>
<evidence type="ECO:0000305" key="3"/>
<dbReference type="EC" id="3.4.23.-"/>
<dbReference type="EC" id="2.7.7.49"/>
<dbReference type="EMBL" id="AF364175">
    <property type="protein sequence ID" value="AAP78924.1"/>
    <property type="molecule type" value="Genomic_DNA"/>
</dbReference>
<dbReference type="RefSeq" id="NP_861410.1">
    <property type="nucleotide sequence ID" value="NC_004324.3"/>
</dbReference>
<dbReference type="SMR" id="Q7TD08"/>
<dbReference type="MEROPS" id="A03.001"/>
<dbReference type="KEGG" id="vg:1732955"/>
<dbReference type="OrthoDB" id="2224at10239"/>
<dbReference type="Proteomes" id="UP000007763">
    <property type="component" value="Genome"/>
</dbReference>
<dbReference type="GO" id="GO:0004190">
    <property type="term" value="F:aspartic-type endopeptidase activity"/>
    <property type="evidence" value="ECO:0007669"/>
    <property type="project" value="UniProtKB-KW"/>
</dbReference>
<dbReference type="GO" id="GO:0004519">
    <property type="term" value="F:endonuclease activity"/>
    <property type="evidence" value="ECO:0007669"/>
    <property type="project" value="UniProtKB-KW"/>
</dbReference>
<dbReference type="GO" id="GO:0046872">
    <property type="term" value="F:metal ion binding"/>
    <property type="evidence" value="ECO:0007669"/>
    <property type="project" value="UniProtKB-KW"/>
</dbReference>
<dbReference type="GO" id="GO:0003723">
    <property type="term" value="F:RNA binding"/>
    <property type="evidence" value="ECO:0007669"/>
    <property type="project" value="UniProtKB-KW"/>
</dbReference>
<dbReference type="GO" id="GO:0003964">
    <property type="term" value="F:RNA-directed DNA polymerase activity"/>
    <property type="evidence" value="ECO:0007669"/>
    <property type="project" value="UniProtKB-KW"/>
</dbReference>
<dbReference type="GO" id="GO:0006508">
    <property type="term" value="P:proteolysis"/>
    <property type="evidence" value="ECO:0007669"/>
    <property type="project" value="UniProtKB-KW"/>
</dbReference>
<dbReference type="CDD" id="cd00303">
    <property type="entry name" value="retropepsin_like"/>
    <property type="match status" value="1"/>
</dbReference>
<dbReference type="CDD" id="cd09274">
    <property type="entry name" value="RNase_HI_RT_Ty3"/>
    <property type="match status" value="1"/>
</dbReference>
<dbReference type="CDD" id="cd01647">
    <property type="entry name" value="RT_LTR"/>
    <property type="match status" value="1"/>
</dbReference>
<dbReference type="Gene3D" id="3.30.70.270">
    <property type="match status" value="1"/>
</dbReference>
<dbReference type="Gene3D" id="2.40.70.10">
    <property type="entry name" value="Acid Proteases"/>
    <property type="match status" value="1"/>
</dbReference>
<dbReference type="Gene3D" id="3.10.10.10">
    <property type="entry name" value="HIV Type 1 Reverse Transcriptase, subunit A, domain 1"/>
    <property type="match status" value="1"/>
</dbReference>
<dbReference type="Gene3D" id="3.30.420.10">
    <property type="entry name" value="Ribonuclease H-like superfamily/Ribonuclease H"/>
    <property type="match status" value="1"/>
</dbReference>
<dbReference type="InterPro" id="IPR043502">
    <property type="entry name" value="DNA/RNA_pol_sf"/>
</dbReference>
<dbReference type="InterPro" id="IPR000588">
    <property type="entry name" value="Pept_A3A"/>
</dbReference>
<dbReference type="InterPro" id="IPR021109">
    <property type="entry name" value="Peptidase_aspartic_dom_sf"/>
</dbReference>
<dbReference type="InterPro" id="IPR043128">
    <property type="entry name" value="Rev_trsase/Diguanyl_cyclase"/>
</dbReference>
<dbReference type="InterPro" id="IPR036397">
    <property type="entry name" value="RNaseH_sf"/>
</dbReference>
<dbReference type="InterPro" id="IPR000477">
    <property type="entry name" value="RT_dom"/>
</dbReference>
<dbReference type="InterPro" id="IPR041373">
    <property type="entry name" value="RT_RNaseH"/>
</dbReference>
<dbReference type="InterPro" id="IPR051320">
    <property type="entry name" value="Viral_Replic_Matur_Polypro"/>
</dbReference>
<dbReference type="PANTHER" id="PTHR33064">
    <property type="entry name" value="POL PROTEIN"/>
    <property type="match status" value="1"/>
</dbReference>
<dbReference type="PANTHER" id="PTHR33064:SF37">
    <property type="entry name" value="RIBONUCLEASE H"/>
    <property type="match status" value="1"/>
</dbReference>
<dbReference type="Pfam" id="PF02160">
    <property type="entry name" value="Peptidase_A3"/>
    <property type="match status" value="1"/>
</dbReference>
<dbReference type="Pfam" id="PF17917">
    <property type="entry name" value="RT_RNaseH"/>
    <property type="match status" value="1"/>
</dbReference>
<dbReference type="Pfam" id="PF00078">
    <property type="entry name" value="RVT_1"/>
    <property type="match status" value="1"/>
</dbReference>
<dbReference type="PRINTS" id="PR00731">
    <property type="entry name" value="CAULIMOPTASE"/>
</dbReference>
<dbReference type="SUPFAM" id="SSF50630">
    <property type="entry name" value="Acid proteases"/>
    <property type="match status" value="1"/>
</dbReference>
<dbReference type="SUPFAM" id="SSF56672">
    <property type="entry name" value="DNA/RNA polymerases"/>
    <property type="match status" value="1"/>
</dbReference>
<dbReference type="PROSITE" id="PS50878">
    <property type="entry name" value="RT_POL"/>
    <property type="match status" value="1"/>
</dbReference>
<organismHost>
    <name type="scientific">Cestrum parqui</name>
    <dbReference type="NCBI Taxonomy" id="142762"/>
</organismHost>
<name>POL_CYLCV</name>
<protein>
    <recommendedName>
        <fullName>Enzymatic polyprotein</fullName>
    </recommendedName>
    <domain>
        <recommendedName>
            <fullName>Aspartic protease</fullName>
            <ecNumber>3.4.23.-</ecNumber>
        </recommendedName>
    </domain>
    <domain>
        <recommendedName>
            <fullName>Endonuclease</fullName>
        </recommendedName>
    </domain>
    <domain>
        <recommendedName>
            <fullName>Reverse transcriptase</fullName>
            <ecNumber>2.7.7.49</ecNumber>
        </recommendedName>
    </domain>
</protein>
<gene>
    <name type="ORF">ORF V</name>
</gene>
<comment type="function">
    <text evidence="1">Encodes for at least two polypeptides: protease (PR) and reverse transcriptase (RT). The protease processes the polyprotein in cis. Reverse transcriptase is multifunctional enzyme that converts the viral RNA genome into dsDNA in viral cytoplasmic capsids. This enzyme displays a DNA polymerase activity that can copy either DNA or RNA templates, and a ribonuclease H (RNase H) activity that cleaves the RNA strand of RNA-DNA heteroduplexes in a partially processive 3'- to 5'-endonucleasic mode. Neo-synthesized pregenomic RNA (pgRNA) are encapsidated, and reverse-transcribed inside the nucleocapsid. Partial (+)DNA is synthesized from the (-)DNA template and generates the relaxed circular DNA (RC-DNA) genome. After budding and infection, the RC-DNA migrates in the nucleus, and is converted into a plasmid-like covalently closed circular DNA (cccDNA) (By similarity).</text>
</comment>
<comment type="catalytic activity">
    <reaction evidence="2">
        <text>DNA(n) + a 2'-deoxyribonucleoside 5'-triphosphate = DNA(n+1) + diphosphate</text>
        <dbReference type="Rhea" id="RHEA:22508"/>
        <dbReference type="Rhea" id="RHEA-COMP:17339"/>
        <dbReference type="Rhea" id="RHEA-COMP:17340"/>
        <dbReference type="ChEBI" id="CHEBI:33019"/>
        <dbReference type="ChEBI" id="CHEBI:61560"/>
        <dbReference type="ChEBI" id="CHEBI:173112"/>
        <dbReference type="EC" id="2.7.7.49"/>
    </reaction>
</comment>
<comment type="domain">
    <text evidence="1">The polymerase/reverse transcriptase (RT) and ribonuclease H (RH) domains are structured in five subdomains: finger, palm, thumb, connection and RNase H. Within the palm subdomain, the 'primer grip' region is thought to be involved in the positioning of the primer terminus for accommodating the incoming nucleotide. The RH domain stabilizes the association of RT with primer-template (By similarity).</text>
</comment>
<comment type="similarity">
    <text evidence="3">Belongs to the caulimoviridae enzymatic polyprotein family.</text>
</comment>
<keyword id="KW-0064">Aspartyl protease</keyword>
<keyword id="KW-0255">Endonuclease</keyword>
<keyword id="KW-0378">Hydrolase</keyword>
<keyword id="KW-0460">Magnesium</keyword>
<keyword id="KW-0479">Metal-binding</keyword>
<keyword id="KW-0511">Multifunctional enzyme</keyword>
<keyword id="KW-0540">Nuclease</keyword>
<keyword id="KW-0548">Nucleotidyltransferase</keyword>
<keyword id="KW-0645">Protease</keyword>
<keyword id="KW-1185">Reference proteome</keyword>
<keyword id="KW-0694">RNA-binding</keyword>
<keyword id="KW-0695">RNA-directed DNA polymerase</keyword>
<keyword id="KW-0808">Transferase</keyword>
<accession>Q7TD08</accession>
<sequence length="643" mass="74082">MKSKGNPNATFITVKINDVFINAYVDTGATICLADPKIKLKWVKMEKPIKISIADKSVQEIWHRAEMVEIWIRNYKFVAATVCQKSSGMDFVIGNNFLRLYQPFIQGLNYIKLRAPLDKDINQPSKMIYIPVTTPSKILQFAILEKLQDILFELHVQENSKTPLELKVSSTLEEVCDENPLDVKNTNTELVKIELINPEKEVNVPNNIPYSLRDINEFSQECADLVRKGIIEESKSPHSAPAFYVENHNEIKRKKRRMVINYKALNKATIGNAHKLPRIDSILTKVKGSNWFSTLDAKSGYWQLRLHPQSKPLTAFSCPPQKHYQWNVLPFGLKQAPGIYQNFMDKNLEGLENFCLAYIDDILVFTNSSREEHLSKLLVVLERCKEKGLILSKKKAIIARQTIDFLGLTLQENGEIKLQPNVLEKLELFPDAIEDRKQLQRFLGCLNYIADKGFLKEIAKETKNLYPKVSITNPWHWSDLDSKLVNQIKKKCKDLSPLYFPKPEDYLIIETDASGDTWAGCLKAAELLFPKGTKNKVVERLCKYTSGIFSSAEQKYTVHEKETLAALKTMRKWKAELLPKEFTLRTDSSYVTGFARHNLKANYNQGRLVRWQLEFLQYPARVEYIKGEKNSLADTLTREWKQQ</sequence>
<feature type="chain" id="PRO_0000317781" description="Enzymatic polyprotein">
    <location>
        <begin position="1"/>
        <end position="643"/>
    </location>
</feature>
<feature type="domain" description="Peptidase A3A">
    <location>
        <begin position="6"/>
        <end position="209"/>
    </location>
</feature>
<feature type="domain" description="Reverse transcriptase" evidence="2">
    <location>
        <begin position="226"/>
        <end position="410"/>
    </location>
</feature>
<feature type="active site" description="For protease activity" evidence="1">
    <location>
        <position position="26"/>
    </location>
</feature>
<feature type="binding site" evidence="2">
    <location>
        <position position="296"/>
    </location>
    <ligand>
        <name>Mg(2+)</name>
        <dbReference type="ChEBI" id="CHEBI:18420"/>
        <note>catalytic</note>
    </ligand>
</feature>
<feature type="binding site" evidence="2">
    <location>
        <position position="360"/>
    </location>
    <ligand>
        <name>Mg(2+)</name>
        <dbReference type="ChEBI" id="CHEBI:18420"/>
        <note>catalytic</note>
    </ligand>
</feature>
<feature type="binding site" evidence="2">
    <location>
        <position position="361"/>
    </location>
    <ligand>
        <name>Mg(2+)</name>
        <dbReference type="ChEBI" id="CHEBI:18420"/>
        <note>catalytic</note>
    </ligand>
</feature>
<reference key="1">
    <citation type="journal article" date="2003" name="J. Gen. Virol.">
        <title>Characterization of Cestrum yellow leaf curling virus: a new member of the family Caulimoviridae.</title>
        <authorList>
            <person name="Stavolone L."/>
            <person name="Ragozzino A."/>
            <person name="Hohn T."/>
        </authorList>
    </citation>
    <scope>NUCLEOTIDE SEQUENCE [GENOMIC DNA]</scope>
</reference>
<organism>
    <name type="scientific">Cestrum yellow leaf curling virus</name>
    <name type="common">CmYLCV</name>
    <dbReference type="NCBI Taxonomy" id="175814"/>
    <lineage>
        <taxon>Viruses</taxon>
        <taxon>Riboviria</taxon>
        <taxon>Pararnavirae</taxon>
        <taxon>Artverviricota</taxon>
        <taxon>Revtraviricetes</taxon>
        <taxon>Ortervirales</taxon>
        <taxon>Caulimoviridae</taxon>
        <taxon>Soymovirus</taxon>
        <taxon>Soymovirus crispocestri</taxon>
    </lineage>
</organism>